<feature type="chain" id="PRO_0000274715" description="Phosphonates import ATP-binding protein PhnC">
    <location>
        <begin position="1"/>
        <end position="257"/>
    </location>
</feature>
<feature type="domain" description="ABC transporter" evidence="1">
    <location>
        <begin position="7"/>
        <end position="251"/>
    </location>
</feature>
<feature type="binding site" evidence="1">
    <location>
        <begin position="40"/>
        <end position="47"/>
    </location>
    <ligand>
        <name>ATP</name>
        <dbReference type="ChEBI" id="CHEBI:30616"/>
    </ligand>
</feature>
<protein>
    <recommendedName>
        <fullName evidence="1">Phosphonates import ATP-binding protein PhnC</fullName>
        <ecNumber evidence="1">7.3.2.2</ecNumber>
    </recommendedName>
</protein>
<accession>Q5FMM1</accession>
<gene>
    <name evidence="1" type="primary">phnC</name>
    <name type="ordered locus">LBA0152</name>
</gene>
<organism>
    <name type="scientific">Lactobacillus acidophilus (strain ATCC 700396 / NCK56 / N2 / NCFM)</name>
    <dbReference type="NCBI Taxonomy" id="272621"/>
    <lineage>
        <taxon>Bacteria</taxon>
        <taxon>Bacillati</taxon>
        <taxon>Bacillota</taxon>
        <taxon>Bacilli</taxon>
        <taxon>Lactobacillales</taxon>
        <taxon>Lactobacillaceae</taxon>
        <taxon>Lactobacillus</taxon>
    </lineage>
</organism>
<dbReference type="EC" id="7.3.2.2" evidence="1"/>
<dbReference type="EMBL" id="CP000033">
    <property type="protein sequence ID" value="AAV42053.1"/>
    <property type="molecule type" value="Genomic_DNA"/>
</dbReference>
<dbReference type="RefSeq" id="WP_003548759.1">
    <property type="nucleotide sequence ID" value="NC_006814.3"/>
</dbReference>
<dbReference type="RefSeq" id="YP_193084.1">
    <property type="nucleotide sequence ID" value="NC_006814.3"/>
</dbReference>
<dbReference type="SMR" id="Q5FMM1"/>
<dbReference type="STRING" id="272621.LBA0152"/>
<dbReference type="GeneID" id="93290739"/>
<dbReference type="KEGG" id="lac:LBA0152"/>
<dbReference type="PATRIC" id="fig|272621.13.peg.147"/>
<dbReference type="eggNOG" id="COG3638">
    <property type="taxonomic scope" value="Bacteria"/>
</dbReference>
<dbReference type="HOGENOM" id="CLU_000604_1_22_9"/>
<dbReference type="OrthoDB" id="9802264at2"/>
<dbReference type="BioCyc" id="LACI272621:G1G49-150-MONOMER"/>
<dbReference type="Proteomes" id="UP000006381">
    <property type="component" value="Chromosome"/>
</dbReference>
<dbReference type="GO" id="GO:0005886">
    <property type="term" value="C:plasma membrane"/>
    <property type="evidence" value="ECO:0007669"/>
    <property type="project" value="UniProtKB-SubCell"/>
</dbReference>
<dbReference type="GO" id="GO:0015416">
    <property type="term" value="F:ABC-type phosphonate transporter activity"/>
    <property type="evidence" value="ECO:0007669"/>
    <property type="project" value="UniProtKB-EC"/>
</dbReference>
<dbReference type="GO" id="GO:0005524">
    <property type="term" value="F:ATP binding"/>
    <property type="evidence" value="ECO:0007669"/>
    <property type="project" value="UniProtKB-KW"/>
</dbReference>
<dbReference type="GO" id="GO:0016887">
    <property type="term" value="F:ATP hydrolysis activity"/>
    <property type="evidence" value="ECO:0007669"/>
    <property type="project" value="InterPro"/>
</dbReference>
<dbReference type="CDD" id="cd03256">
    <property type="entry name" value="ABC_PhnC_transporter"/>
    <property type="match status" value="1"/>
</dbReference>
<dbReference type="Gene3D" id="3.40.50.300">
    <property type="entry name" value="P-loop containing nucleotide triphosphate hydrolases"/>
    <property type="match status" value="1"/>
</dbReference>
<dbReference type="InterPro" id="IPR003593">
    <property type="entry name" value="AAA+_ATPase"/>
</dbReference>
<dbReference type="InterPro" id="IPR003439">
    <property type="entry name" value="ABC_transporter-like_ATP-bd"/>
</dbReference>
<dbReference type="InterPro" id="IPR017871">
    <property type="entry name" value="ABC_transporter-like_CS"/>
</dbReference>
<dbReference type="InterPro" id="IPR012693">
    <property type="entry name" value="ABC_transpr_PhnC"/>
</dbReference>
<dbReference type="InterPro" id="IPR050086">
    <property type="entry name" value="MetN_ABC_transporter-like"/>
</dbReference>
<dbReference type="InterPro" id="IPR027417">
    <property type="entry name" value="P-loop_NTPase"/>
</dbReference>
<dbReference type="NCBIfam" id="TIGR02315">
    <property type="entry name" value="ABC_phnC"/>
    <property type="match status" value="1"/>
</dbReference>
<dbReference type="PANTHER" id="PTHR43166">
    <property type="entry name" value="AMINO ACID IMPORT ATP-BINDING PROTEIN"/>
    <property type="match status" value="1"/>
</dbReference>
<dbReference type="PANTHER" id="PTHR43166:SF6">
    <property type="entry name" value="PHOSPHONATES IMPORT ATP-BINDING PROTEIN PHNC"/>
    <property type="match status" value="1"/>
</dbReference>
<dbReference type="Pfam" id="PF00005">
    <property type="entry name" value="ABC_tran"/>
    <property type="match status" value="1"/>
</dbReference>
<dbReference type="SMART" id="SM00382">
    <property type="entry name" value="AAA"/>
    <property type="match status" value="1"/>
</dbReference>
<dbReference type="SUPFAM" id="SSF52540">
    <property type="entry name" value="P-loop containing nucleoside triphosphate hydrolases"/>
    <property type="match status" value="1"/>
</dbReference>
<dbReference type="PROSITE" id="PS00211">
    <property type="entry name" value="ABC_TRANSPORTER_1"/>
    <property type="match status" value="1"/>
</dbReference>
<dbReference type="PROSITE" id="PS50893">
    <property type="entry name" value="ABC_TRANSPORTER_2"/>
    <property type="match status" value="1"/>
</dbReference>
<dbReference type="PROSITE" id="PS51249">
    <property type="entry name" value="PHNC"/>
    <property type="match status" value="1"/>
</dbReference>
<proteinExistence type="inferred from homology"/>
<keyword id="KW-0067">ATP-binding</keyword>
<keyword id="KW-1003">Cell membrane</keyword>
<keyword id="KW-0472">Membrane</keyword>
<keyword id="KW-0547">Nucleotide-binding</keyword>
<keyword id="KW-0918">Phosphonate transport</keyword>
<keyword id="KW-1185">Reference proteome</keyword>
<keyword id="KW-1278">Translocase</keyword>
<keyword id="KW-0813">Transport</keyword>
<comment type="function">
    <text evidence="1">Part of the ABC transporter complex PhnCDE involved in phosphonates import. Responsible for energy coupling to the transport system.</text>
</comment>
<comment type="catalytic activity">
    <reaction evidence="1">
        <text>phosphonate(out) + ATP + H2O = phosphonate(in) + ADP + phosphate + H(+)</text>
        <dbReference type="Rhea" id="RHEA:18065"/>
        <dbReference type="ChEBI" id="CHEBI:15377"/>
        <dbReference type="ChEBI" id="CHEBI:15378"/>
        <dbReference type="ChEBI" id="CHEBI:16215"/>
        <dbReference type="ChEBI" id="CHEBI:30616"/>
        <dbReference type="ChEBI" id="CHEBI:43474"/>
        <dbReference type="ChEBI" id="CHEBI:456216"/>
        <dbReference type="EC" id="7.3.2.2"/>
    </reaction>
</comment>
<comment type="subunit">
    <text evidence="1">The complex is composed of two ATP-binding proteins (PhnC), two transmembrane proteins (PhnE) and a solute-binding protein (PhnD).</text>
</comment>
<comment type="subcellular location">
    <subcellularLocation>
        <location evidence="1">Cell membrane</location>
        <topology evidence="1">Peripheral membrane protein</topology>
    </subcellularLocation>
</comment>
<comment type="similarity">
    <text evidence="1">Belongs to the ABC transporter superfamily. Phosphonates importer (TC 3.A.1.9.1) family.</text>
</comment>
<sequence>MADKPMIQLKDVSKIYDNGTVGLKDINLKINKGEFVVVVGLSGAGKSTLLRSINRLHDISSGDILIDGKSITNAKGKNLRELRRDIGMIFQNFNLVKRSSVLRNVLVGRVAYYPTWKTTFNLFTKEDKQKAYEALQKVDLADKVYARADELSGGQQQRVAIARVLMQNPKIILADEPTASLDPQTSVRVMNDLKMLNEKYGMTVVANLHSIELAQQFGKRVIGIRAGQVVYDGKMEDTPKSVFTDIYNGGDGNEGAE</sequence>
<evidence type="ECO:0000255" key="1">
    <source>
        <dbReference type="HAMAP-Rule" id="MF_01713"/>
    </source>
</evidence>
<name>PHNC_LACAC</name>
<reference key="1">
    <citation type="journal article" date="2005" name="Proc. Natl. Acad. Sci. U.S.A.">
        <title>Complete genome sequence of the probiotic lactic acid bacterium Lactobacillus acidophilus NCFM.</title>
        <authorList>
            <person name="Altermann E."/>
            <person name="Russell W.M."/>
            <person name="Azcarate-Peril M.A."/>
            <person name="Barrangou R."/>
            <person name="Buck B.L."/>
            <person name="McAuliffe O."/>
            <person name="Souther N."/>
            <person name="Dobson A."/>
            <person name="Duong T."/>
            <person name="Callanan M."/>
            <person name="Lick S."/>
            <person name="Hamrick A."/>
            <person name="Cano R."/>
            <person name="Klaenhammer T.R."/>
        </authorList>
    </citation>
    <scope>NUCLEOTIDE SEQUENCE [LARGE SCALE GENOMIC DNA]</scope>
    <source>
        <strain>ATCC 700396 / NCK56 / N2 / NCFM</strain>
    </source>
</reference>